<feature type="chain" id="PRO_0000245167" description="U6 snRNA-associated Sm-like protein LSm1">
    <location>
        <begin position="1"/>
        <end position="133"/>
    </location>
</feature>
<feature type="domain" description="Sm" evidence="3">
    <location>
        <begin position="5"/>
        <end position="80"/>
    </location>
</feature>
<feature type="modified residue" description="Phosphoserine" evidence="1">
    <location>
        <position position="123"/>
    </location>
</feature>
<feature type="modified residue" description="Phosphothreonine" evidence="1">
    <location>
        <position position="129"/>
    </location>
</feature>
<gene>
    <name type="primary">LSM1</name>
</gene>
<sequence length="133" mass="15193">MNYMPGTASLIEDIDKKHLVLLRDGRTLIGFLRSIDQFANLVLHQTVERIHVGKKYGDIPRGIFVVRGENVVLLGEIDLEKESDTPLQQVSIEEILEEQRVEQQTKLEAEKLKVQALKDRGLSIPRADTLEEY</sequence>
<protein>
    <recommendedName>
        <fullName>U6 snRNA-associated Sm-like protein LSm1</fullName>
    </recommendedName>
</protein>
<proteinExistence type="evidence at transcript level"/>
<accession>Q5E9Z8</accession>
<comment type="function">
    <text evidence="1 2">Plays a role in the degradation of histone mRNAs, the only eukaryotic mRNAs that are not polyadenylated (By similarity). Probably also part of an LSm subunits-containing complex involved in the general process of mRNA degradation (By similarity).</text>
</comment>
<comment type="subunit">
    <text evidence="1 2">Interacts with SLBP; interaction with SLBP occurs when histone mRNA is being rapidly degraded during the S phase (By similarity). LSm subunits form a heteromer with a donut shape (By similarity).</text>
</comment>
<comment type="subcellular location">
    <subcellularLocation>
        <location evidence="1">Cytoplasm</location>
    </subcellularLocation>
    <subcellularLocation>
        <location evidence="1">Cytoplasm</location>
        <location evidence="1">P-body</location>
    </subcellularLocation>
</comment>
<comment type="similarity">
    <text evidence="4">Belongs to the snRNP Sm proteins family.</text>
</comment>
<dbReference type="EMBL" id="BT020738">
    <property type="protein sequence ID" value="AAX08755.1"/>
    <property type="molecule type" value="mRNA"/>
</dbReference>
<dbReference type="EMBL" id="BT020771">
    <property type="protein sequence ID" value="AAX08788.1"/>
    <property type="molecule type" value="mRNA"/>
</dbReference>
<dbReference type="EMBL" id="BT020779">
    <property type="protein sequence ID" value="AAX08796.1"/>
    <property type="molecule type" value="mRNA"/>
</dbReference>
<dbReference type="RefSeq" id="NP_001017952.1">
    <property type="nucleotide sequence ID" value="NM_001017952.1"/>
</dbReference>
<dbReference type="SMR" id="Q5E9Z8"/>
<dbReference type="FunCoup" id="Q5E9Z8">
    <property type="interactions" value="3648"/>
</dbReference>
<dbReference type="STRING" id="9913.ENSBTAP00000002113"/>
<dbReference type="PaxDb" id="9913-ENSBTAP00000002113"/>
<dbReference type="Ensembl" id="ENSBTAT00000002113.3">
    <property type="protein sequence ID" value="ENSBTAP00000002113.1"/>
    <property type="gene ID" value="ENSBTAG00000001612.3"/>
</dbReference>
<dbReference type="GeneID" id="535447"/>
<dbReference type="KEGG" id="bta:535447"/>
<dbReference type="CTD" id="27257"/>
<dbReference type="VEuPathDB" id="HostDB:ENSBTAG00000001612"/>
<dbReference type="VGNC" id="VGNC:31050">
    <property type="gene designation" value="LSM1"/>
</dbReference>
<dbReference type="eggNOG" id="KOG1782">
    <property type="taxonomic scope" value="Eukaryota"/>
</dbReference>
<dbReference type="GeneTree" id="ENSGT00730000111133"/>
<dbReference type="HOGENOM" id="CLU_076902_0_1_1"/>
<dbReference type="InParanoid" id="Q5E9Z8"/>
<dbReference type="OMA" id="IGYLRCV"/>
<dbReference type="OrthoDB" id="422364at2759"/>
<dbReference type="TreeFam" id="TF105846"/>
<dbReference type="Reactome" id="R-BTA-430039">
    <property type="pathway name" value="mRNA decay by 5' to 3' exoribonuclease"/>
</dbReference>
<dbReference type="Proteomes" id="UP000009136">
    <property type="component" value="Chromosome 27"/>
</dbReference>
<dbReference type="Bgee" id="ENSBTAG00000001612">
    <property type="expression patterns" value="Expressed in oocyte and 107 other cell types or tissues"/>
</dbReference>
<dbReference type="GO" id="GO:1990726">
    <property type="term" value="C:Lsm1-7-Pat1 complex"/>
    <property type="evidence" value="ECO:0000318"/>
    <property type="project" value="GO_Central"/>
</dbReference>
<dbReference type="GO" id="GO:0005634">
    <property type="term" value="C:nucleus"/>
    <property type="evidence" value="ECO:0007669"/>
    <property type="project" value="Ensembl"/>
</dbReference>
<dbReference type="GO" id="GO:0000932">
    <property type="term" value="C:P-body"/>
    <property type="evidence" value="ECO:0000318"/>
    <property type="project" value="GO_Central"/>
</dbReference>
<dbReference type="GO" id="GO:1990904">
    <property type="term" value="C:ribonucleoprotein complex"/>
    <property type="evidence" value="ECO:0007669"/>
    <property type="project" value="UniProtKB-KW"/>
</dbReference>
<dbReference type="GO" id="GO:0003729">
    <property type="term" value="F:mRNA binding"/>
    <property type="evidence" value="ECO:0000318"/>
    <property type="project" value="GO_Central"/>
</dbReference>
<dbReference type="GO" id="GO:0000290">
    <property type="term" value="P:deadenylation-dependent decapping of nuclear-transcribed mRNA"/>
    <property type="evidence" value="ECO:0000318"/>
    <property type="project" value="GO_Central"/>
</dbReference>
<dbReference type="GO" id="GO:0071044">
    <property type="term" value="P:histone mRNA catabolic process"/>
    <property type="evidence" value="ECO:0000250"/>
    <property type="project" value="UniProtKB"/>
</dbReference>
<dbReference type="GO" id="GO:0006397">
    <property type="term" value="P:mRNA processing"/>
    <property type="evidence" value="ECO:0007669"/>
    <property type="project" value="UniProtKB-KW"/>
</dbReference>
<dbReference type="GO" id="GO:0045665">
    <property type="term" value="P:negative regulation of neuron differentiation"/>
    <property type="evidence" value="ECO:0007669"/>
    <property type="project" value="Ensembl"/>
</dbReference>
<dbReference type="GO" id="GO:0030182">
    <property type="term" value="P:neuron differentiation"/>
    <property type="evidence" value="ECO:0007669"/>
    <property type="project" value="Ensembl"/>
</dbReference>
<dbReference type="GO" id="GO:0008380">
    <property type="term" value="P:RNA splicing"/>
    <property type="evidence" value="ECO:0007669"/>
    <property type="project" value="UniProtKB-KW"/>
</dbReference>
<dbReference type="GO" id="GO:0019827">
    <property type="term" value="P:stem cell population maintenance"/>
    <property type="evidence" value="ECO:0007669"/>
    <property type="project" value="Ensembl"/>
</dbReference>
<dbReference type="CDD" id="cd01728">
    <property type="entry name" value="LSm1"/>
    <property type="match status" value="1"/>
</dbReference>
<dbReference type="FunFam" id="2.30.30.100:FF:000021">
    <property type="entry name" value="U6 snRNA-associated Sm-like protein LSm1"/>
    <property type="match status" value="1"/>
</dbReference>
<dbReference type="Gene3D" id="2.30.30.100">
    <property type="match status" value="1"/>
</dbReference>
<dbReference type="InterPro" id="IPR034104">
    <property type="entry name" value="Lsm1"/>
</dbReference>
<dbReference type="InterPro" id="IPR010920">
    <property type="entry name" value="LSM_dom_sf"/>
</dbReference>
<dbReference type="InterPro" id="IPR044642">
    <property type="entry name" value="PTHR15588"/>
</dbReference>
<dbReference type="InterPro" id="IPR047575">
    <property type="entry name" value="Sm"/>
</dbReference>
<dbReference type="InterPro" id="IPR001163">
    <property type="entry name" value="Sm_dom_euk/arc"/>
</dbReference>
<dbReference type="PANTHER" id="PTHR15588">
    <property type="entry name" value="LSM1"/>
    <property type="match status" value="1"/>
</dbReference>
<dbReference type="PANTHER" id="PTHR15588:SF8">
    <property type="entry name" value="U6 SNRNA-ASSOCIATED SM-LIKE PROTEIN LSM1"/>
    <property type="match status" value="1"/>
</dbReference>
<dbReference type="Pfam" id="PF01423">
    <property type="entry name" value="LSM"/>
    <property type="match status" value="1"/>
</dbReference>
<dbReference type="SMART" id="SM00651">
    <property type="entry name" value="Sm"/>
    <property type="match status" value="1"/>
</dbReference>
<dbReference type="SUPFAM" id="SSF50182">
    <property type="entry name" value="Sm-like ribonucleoproteins"/>
    <property type="match status" value="1"/>
</dbReference>
<dbReference type="PROSITE" id="PS52002">
    <property type="entry name" value="SM"/>
    <property type="match status" value="1"/>
</dbReference>
<evidence type="ECO:0000250" key="1">
    <source>
        <dbReference type="UniProtKB" id="O15116"/>
    </source>
</evidence>
<evidence type="ECO:0000250" key="2">
    <source>
        <dbReference type="UniProtKB" id="P47017"/>
    </source>
</evidence>
<evidence type="ECO:0000255" key="3">
    <source>
        <dbReference type="PROSITE-ProRule" id="PRU01346"/>
    </source>
</evidence>
<evidence type="ECO:0000305" key="4"/>
<reference key="1">
    <citation type="journal article" date="2005" name="BMC Genomics">
        <title>Characterization of 954 bovine full-CDS cDNA sequences.</title>
        <authorList>
            <person name="Harhay G.P."/>
            <person name="Sonstegard T.S."/>
            <person name="Keele J.W."/>
            <person name="Heaton M.P."/>
            <person name="Clawson M.L."/>
            <person name="Snelling W.M."/>
            <person name="Wiedmann R.T."/>
            <person name="Van Tassell C.P."/>
            <person name="Smith T.P.L."/>
        </authorList>
    </citation>
    <scope>NUCLEOTIDE SEQUENCE [LARGE SCALE MRNA]</scope>
</reference>
<organism>
    <name type="scientific">Bos taurus</name>
    <name type="common">Bovine</name>
    <dbReference type="NCBI Taxonomy" id="9913"/>
    <lineage>
        <taxon>Eukaryota</taxon>
        <taxon>Metazoa</taxon>
        <taxon>Chordata</taxon>
        <taxon>Craniata</taxon>
        <taxon>Vertebrata</taxon>
        <taxon>Euteleostomi</taxon>
        <taxon>Mammalia</taxon>
        <taxon>Eutheria</taxon>
        <taxon>Laurasiatheria</taxon>
        <taxon>Artiodactyla</taxon>
        <taxon>Ruminantia</taxon>
        <taxon>Pecora</taxon>
        <taxon>Bovidae</taxon>
        <taxon>Bovinae</taxon>
        <taxon>Bos</taxon>
    </lineage>
</organism>
<name>LSM1_BOVIN</name>
<keyword id="KW-0963">Cytoplasm</keyword>
<keyword id="KW-0507">mRNA processing</keyword>
<keyword id="KW-0508">mRNA splicing</keyword>
<keyword id="KW-0597">Phosphoprotein</keyword>
<keyword id="KW-1185">Reference proteome</keyword>
<keyword id="KW-0687">Ribonucleoprotein</keyword>
<keyword id="KW-0694">RNA-binding</keyword>